<geneLocation type="chloroplast"/>
<gene>
    <name evidence="1" type="primary">rbcL</name>
</gene>
<sequence>MSPQTETKASSGFKAGVKDYRLTYYTPDYKVSDTDILAAFRMTPQPGVPPEEAGAAVAAESSTGTWTTVWTDGLTSLDRYKGRCYGIEPVAGEENQYIAYVAYPLDLFEEGSVTNMFTSIVGNVFGFKALRALRLEDLRIPPAYSKTFMGPPHGIQVERDKLNKYGRPLLGCTIKPKLGLSAKNYGRAVYECLRGGLDFTKDDENVNSQPFMRWRDRFLFVAEALFKSQAETGEIKGHYLNATAGTCEEMMKRAVFARELGAPIVMHDYLTGGFTANTSLAFYCRDNGLLLHIHRAMHAVIDRQRNHGMHFRVLAKALRMSGGDHVHAGTVVGKLEGERDVTLGFVDLLRDDYIEKDRSRGVYFTQDWVSMPGVLPVASGGIHVWHMPALTEIFGDDSVLQFGGGTLGHPWGNAPGAVANRVALEACVQARNEGRDLAREGNDIIREASKWSPELAAACEVWKEIKFVFDTIDVL</sequence>
<accession>P48714</accession>
<protein>
    <recommendedName>
        <fullName evidence="1">Ribulose bisphosphate carboxylase large chain</fullName>
        <shortName evidence="1">RuBisCO large subunit</shortName>
        <ecNumber evidence="1">4.1.1.39</ecNumber>
    </recommendedName>
</protein>
<name>RBL_PSINU</name>
<organism>
    <name type="scientific">Psilotum nudum</name>
    <name type="common">Whisk fern</name>
    <name type="synonym">Lycopodium nudum</name>
    <dbReference type="NCBI Taxonomy" id="3240"/>
    <lineage>
        <taxon>Eukaryota</taxon>
        <taxon>Viridiplantae</taxon>
        <taxon>Streptophyta</taxon>
        <taxon>Embryophyta</taxon>
        <taxon>Tracheophyta</taxon>
        <taxon>Polypodiopsida</taxon>
        <taxon>Ophioglossidae</taxon>
        <taxon>Psilotales</taxon>
        <taxon>Psilotaceae</taxon>
        <taxon>Psilotum</taxon>
    </lineage>
</organism>
<evidence type="ECO:0000255" key="1">
    <source>
        <dbReference type="HAMAP-Rule" id="MF_01338"/>
    </source>
</evidence>
<evidence type="ECO:0000305" key="2"/>
<comment type="function">
    <text evidence="1">RuBisCO catalyzes two reactions: the carboxylation of D-ribulose 1,5-bisphosphate, the primary event in carbon dioxide fixation, as well as the oxidative fragmentation of the pentose substrate in the photorespiration process. Both reactions occur simultaneously and in competition at the same active site.</text>
</comment>
<comment type="catalytic activity">
    <reaction evidence="1">
        <text>2 (2R)-3-phosphoglycerate + 2 H(+) = D-ribulose 1,5-bisphosphate + CO2 + H2O</text>
        <dbReference type="Rhea" id="RHEA:23124"/>
        <dbReference type="ChEBI" id="CHEBI:15377"/>
        <dbReference type="ChEBI" id="CHEBI:15378"/>
        <dbReference type="ChEBI" id="CHEBI:16526"/>
        <dbReference type="ChEBI" id="CHEBI:57870"/>
        <dbReference type="ChEBI" id="CHEBI:58272"/>
        <dbReference type="EC" id="4.1.1.39"/>
    </reaction>
</comment>
<comment type="catalytic activity">
    <reaction evidence="1">
        <text>D-ribulose 1,5-bisphosphate + O2 = 2-phosphoglycolate + (2R)-3-phosphoglycerate + 2 H(+)</text>
        <dbReference type="Rhea" id="RHEA:36631"/>
        <dbReference type="ChEBI" id="CHEBI:15378"/>
        <dbReference type="ChEBI" id="CHEBI:15379"/>
        <dbReference type="ChEBI" id="CHEBI:57870"/>
        <dbReference type="ChEBI" id="CHEBI:58033"/>
        <dbReference type="ChEBI" id="CHEBI:58272"/>
    </reaction>
</comment>
<comment type="cofactor">
    <cofactor evidence="1">
        <name>Mg(2+)</name>
        <dbReference type="ChEBI" id="CHEBI:18420"/>
    </cofactor>
    <text evidence="1">Binds 1 Mg(2+) ion per subunit.</text>
</comment>
<comment type="subunit">
    <text evidence="1">Heterohexadecamer of 8 large chains and 8 small chains; disulfide-linked. The disulfide link is formed within the large subunit homodimers.</text>
</comment>
<comment type="subcellular location">
    <subcellularLocation>
        <location>Plastid</location>
        <location>Chloroplast</location>
    </subcellularLocation>
</comment>
<comment type="PTM">
    <text evidence="1">The disulfide bond which can form in the large chain dimeric partners within the hexadecamer appears to be associated with oxidative stress and protein turnover.</text>
</comment>
<comment type="miscellaneous">
    <text evidence="1">The basic functional RuBisCO is composed of a large chain homodimer in a 'head-to-tail' conformation. In form I RuBisCO this homodimer is arranged in a barrel-like tetramer with the small subunits forming a tetrameric 'cap' on each end of the 'barrel'.</text>
</comment>
<comment type="similarity">
    <text evidence="1">Belongs to the RuBisCO large chain family. Type I subfamily.</text>
</comment>
<feature type="propeptide" id="PRO_0000031381" evidence="1">
    <location>
        <begin position="1"/>
        <end position="2"/>
    </location>
</feature>
<feature type="chain" id="PRO_0000031382" description="Ribulose bisphosphate carboxylase large chain">
    <location>
        <begin position="3"/>
        <end position="475"/>
    </location>
</feature>
<feature type="active site" description="Proton acceptor" evidence="1">
    <location>
        <position position="175"/>
    </location>
</feature>
<feature type="active site" description="Proton acceptor" evidence="1">
    <location>
        <position position="294"/>
    </location>
</feature>
<feature type="binding site" description="in homodimeric partner" evidence="1">
    <location>
        <position position="123"/>
    </location>
    <ligand>
        <name>substrate</name>
    </ligand>
</feature>
<feature type="binding site" evidence="1">
    <location>
        <position position="173"/>
    </location>
    <ligand>
        <name>substrate</name>
    </ligand>
</feature>
<feature type="binding site" evidence="1">
    <location>
        <position position="177"/>
    </location>
    <ligand>
        <name>substrate</name>
    </ligand>
</feature>
<feature type="binding site" description="via carbamate group" evidence="1">
    <location>
        <position position="201"/>
    </location>
    <ligand>
        <name>Mg(2+)</name>
        <dbReference type="ChEBI" id="CHEBI:18420"/>
    </ligand>
</feature>
<feature type="binding site" evidence="1">
    <location>
        <position position="203"/>
    </location>
    <ligand>
        <name>Mg(2+)</name>
        <dbReference type="ChEBI" id="CHEBI:18420"/>
    </ligand>
</feature>
<feature type="binding site" evidence="1">
    <location>
        <position position="204"/>
    </location>
    <ligand>
        <name>Mg(2+)</name>
        <dbReference type="ChEBI" id="CHEBI:18420"/>
    </ligand>
</feature>
<feature type="binding site" evidence="1">
    <location>
        <position position="295"/>
    </location>
    <ligand>
        <name>substrate</name>
    </ligand>
</feature>
<feature type="binding site" evidence="1">
    <location>
        <position position="327"/>
    </location>
    <ligand>
        <name>substrate</name>
    </ligand>
</feature>
<feature type="binding site" evidence="1">
    <location>
        <position position="379"/>
    </location>
    <ligand>
        <name>substrate</name>
    </ligand>
</feature>
<feature type="site" description="Transition state stabilizer" evidence="1">
    <location>
        <position position="334"/>
    </location>
</feature>
<feature type="modified residue" description="N-acetylproline" evidence="1">
    <location>
        <position position="3"/>
    </location>
</feature>
<feature type="modified residue" description="N6,N6,N6-trimethyllysine" evidence="1">
    <location>
        <position position="14"/>
    </location>
</feature>
<feature type="modified residue" description="N6-carboxylysine" evidence="1">
    <location>
        <position position="201"/>
    </location>
</feature>
<feature type="disulfide bond" description="Interchain; in linked form" evidence="1">
    <location>
        <position position="247"/>
    </location>
</feature>
<feature type="sequence conflict" description="In Ref. 1; AAA53416." evidence="2" ref="1">
    <original>A</original>
    <variation>R</variation>
    <location>
        <position position="417"/>
    </location>
</feature>
<dbReference type="EC" id="4.1.1.39" evidence="1"/>
<dbReference type="EMBL" id="L11059">
    <property type="protein sequence ID" value="AAA53416.1"/>
    <property type="molecule type" value="Genomic_DNA"/>
</dbReference>
<dbReference type="EMBL" id="AP004638">
    <property type="protein sequence ID" value="BAB84224.1"/>
    <property type="molecule type" value="Genomic_DNA"/>
</dbReference>
<dbReference type="EMBL" id="U30835">
    <property type="protein sequence ID" value="AAA74279.1"/>
    <property type="molecule type" value="Genomic_DNA"/>
</dbReference>
<dbReference type="RefSeq" id="NP_569637.1">
    <property type="nucleotide sequence ID" value="NC_003386.1"/>
</dbReference>
<dbReference type="SMR" id="P48714"/>
<dbReference type="GeneID" id="2545153"/>
<dbReference type="GO" id="GO:0009507">
    <property type="term" value="C:chloroplast"/>
    <property type="evidence" value="ECO:0007669"/>
    <property type="project" value="UniProtKB-SubCell"/>
</dbReference>
<dbReference type="GO" id="GO:0000287">
    <property type="term" value="F:magnesium ion binding"/>
    <property type="evidence" value="ECO:0007669"/>
    <property type="project" value="UniProtKB-UniRule"/>
</dbReference>
<dbReference type="GO" id="GO:0004497">
    <property type="term" value="F:monooxygenase activity"/>
    <property type="evidence" value="ECO:0007669"/>
    <property type="project" value="UniProtKB-KW"/>
</dbReference>
<dbReference type="GO" id="GO:0016984">
    <property type="term" value="F:ribulose-bisphosphate carboxylase activity"/>
    <property type="evidence" value="ECO:0007669"/>
    <property type="project" value="UniProtKB-UniRule"/>
</dbReference>
<dbReference type="GO" id="GO:0009853">
    <property type="term" value="P:photorespiration"/>
    <property type="evidence" value="ECO:0007669"/>
    <property type="project" value="UniProtKB-KW"/>
</dbReference>
<dbReference type="GO" id="GO:0019253">
    <property type="term" value="P:reductive pentose-phosphate cycle"/>
    <property type="evidence" value="ECO:0007669"/>
    <property type="project" value="UniProtKB-UniRule"/>
</dbReference>
<dbReference type="CDD" id="cd08212">
    <property type="entry name" value="RuBisCO_large_I"/>
    <property type="match status" value="1"/>
</dbReference>
<dbReference type="FunFam" id="3.20.20.110:FF:000001">
    <property type="entry name" value="Ribulose bisphosphate carboxylase large chain"/>
    <property type="match status" value="1"/>
</dbReference>
<dbReference type="FunFam" id="3.30.70.150:FF:000001">
    <property type="entry name" value="Ribulose bisphosphate carboxylase large chain"/>
    <property type="match status" value="1"/>
</dbReference>
<dbReference type="Gene3D" id="3.20.20.110">
    <property type="entry name" value="Ribulose bisphosphate carboxylase, large subunit, C-terminal domain"/>
    <property type="match status" value="1"/>
</dbReference>
<dbReference type="Gene3D" id="3.30.70.150">
    <property type="entry name" value="RuBisCO large subunit, N-terminal domain"/>
    <property type="match status" value="1"/>
</dbReference>
<dbReference type="HAMAP" id="MF_01338">
    <property type="entry name" value="RuBisCO_L_type1"/>
    <property type="match status" value="1"/>
</dbReference>
<dbReference type="InterPro" id="IPR033966">
    <property type="entry name" value="RuBisCO"/>
</dbReference>
<dbReference type="InterPro" id="IPR020878">
    <property type="entry name" value="RuBisCo_large_chain_AS"/>
</dbReference>
<dbReference type="InterPro" id="IPR000685">
    <property type="entry name" value="RuBisCO_lsu_C"/>
</dbReference>
<dbReference type="InterPro" id="IPR036376">
    <property type="entry name" value="RuBisCO_lsu_C_sf"/>
</dbReference>
<dbReference type="InterPro" id="IPR017443">
    <property type="entry name" value="RuBisCO_lsu_fd_N"/>
</dbReference>
<dbReference type="InterPro" id="IPR036422">
    <property type="entry name" value="RuBisCO_lsu_N_sf"/>
</dbReference>
<dbReference type="InterPro" id="IPR020888">
    <property type="entry name" value="RuBisCO_lsuI"/>
</dbReference>
<dbReference type="NCBIfam" id="NF003252">
    <property type="entry name" value="PRK04208.1"/>
    <property type="match status" value="1"/>
</dbReference>
<dbReference type="PANTHER" id="PTHR42704">
    <property type="entry name" value="RIBULOSE BISPHOSPHATE CARBOXYLASE"/>
    <property type="match status" value="1"/>
</dbReference>
<dbReference type="PANTHER" id="PTHR42704:SF17">
    <property type="entry name" value="RIBULOSE BISPHOSPHATE CARBOXYLASE LARGE CHAIN"/>
    <property type="match status" value="1"/>
</dbReference>
<dbReference type="Pfam" id="PF00016">
    <property type="entry name" value="RuBisCO_large"/>
    <property type="match status" value="1"/>
</dbReference>
<dbReference type="Pfam" id="PF02788">
    <property type="entry name" value="RuBisCO_large_N"/>
    <property type="match status" value="1"/>
</dbReference>
<dbReference type="SFLD" id="SFLDG01052">
    <property type="entry name" value="RuBisCO"/>
    <property type="match status" value="1"/>
</dbReference>
<dbReference type="SFLD" id="SFLDS00014">
    <property type="entry name" value="RuBisCO"/>
    <property type="match status" value="1"/>
</dbReference>
<dbReference type="SFLD" id="SFLDG00301">
    <property type="entry name" value="RuBisCO-like_proteins"/>
    <property type="match status" value="1"/>
</dbReference>
<dbReference type="SUPFAM" id="SSF51649">
    <property type="entry name" value="RuBisCo, C-terminal domain"/>
    <property type="match status" value="1"/>
</dbReference>
<dbReference type="SUPFAM" id="SSF54966">
    <property type="entry name" value="RuBisCO, large subunit, small (N-terminal) domain"/>
    <property type="match status" value="1"/>
</dbReference>
<dbReference type="PROSITE" id="PS00157">
    <property type="entry name" value="RUBISCO_LARGE"/>
    <property type="match status" value="1"/>
</dbReference>
<reference key="1">
    <citation type="journal article" date="1994" name="Mol. Phylogenet. Evol.">
        <title>Phylogenetic analysis of green plant rbcL sequences.</title>
        <authorList>
            <person name="Manhart J.R."/>
        </authorList>
    </citation>
    <scope>NUCLEOTIDE SEQUENCE [GENOMIC DNA]</scope>
</reference>
<reference key="2">
    <citation type="journal article" date="2004" name="Mol. Biol. Evol.">
        <title>Chloroplast phylogeny indicates that bryophytes are monophyletic.</title>
        <authorList>
            <person name="Nishiyama T."/>
            <person name="Wolf P.G."/>
            <person name="Kugita M."/>
            <person name="Sinclair R.B."/>
            <person name="Sugita M."/>
            <person name="Sugiura C."/>
            <person name="Wakasugi T."/>
            <person name="Yamada K."/>
            <person name="Yoshinaga K."/>
            <person name="Yamaguchi K."/>
            <person name="Ueda K."/>
            <person name="Hasebe M."/>
        </authorList>
    </citation>
    <scope>NUCLEOTIDE SEQUENCE [LARGE SCALE GENOMIC DNA]</scope>
    <source>
        <strain>Kingyoku</strain>
    </source>
</reference>
<reference key="3">
    <citation type="journal article" date="1995" name="Am. Fern J.">
        <title>A global analysis of fern phylogeny based on rbcL nucleotide sequences.</title>
        <authorList>
            <person name="Hasebe M."/>
            <person name="Wolf P.G."/>
            <person name="Pryer K.M."/>
            <person name="Ueda K."/>
            <person name="Ito M."/>
            <person name="Sano R."/>
            <person name="Gastony G.J."/>
            <person name="Yokoyama J."/>
            <person name="Manhart J.R."/>
            <person name="Murakami N."/>
            <person name="Crane E.H."/>
            <person name="Haufler C.H."/>
            <person name="Hauk W.D."/>
        </authorList>
    </citation>
    <scope>NUCLEOTIDE SEQUENCE [GENOMIC DNA] OF 25-426</scope>
</reference>
<keyword id="KW-0007">Acetylation</keyword>
<keyword id="KW-0113">Calvin cycle</keyword>
<keyword id="KW-0120">Carbon dioxide fixation</keyword>
<keyword id="KW-0150">Chloroplast</keyword>
<keyword id="KW-1015">Disulfide bond</keyword>
<keyword id="KW-0456">Lyase</keyword>
<keyword id="KW-0460">Magnesium</keyword>
<keyword id="KW-0479">Metal-binding</keyword>
<keyword id="KW-0488">Methylation</keyword>
<keyword id="KW-0503">Monooxygenase</keyword>
<keyword id="KW-0560">Oxidoreductase</keyword>
<keyword id="KW-0601">Photorespiration</keyword>
<keyword id="KW-0602">Photosynthesis</keyword>
<keyword id="KW-0934">Plastid</keyword>
<proteinExistence type="inferred from homology"/>